<organism>
    <name type="scientific">Salmonella typhi</name>
    <dbReference type="NCBI Taxonomy" id="90370"/>
    <lineage>
        <taxon>Bacteria</taxon>
        <taxon>Pseudomonadati</taxon>
        <taxon>Pseudomonadota</taxon>
        <taxon>Gammaproteobacteria</taxon>
        <taxon>Enterobacterales</taxon>
        <taxon>Enterobacteriaceae</taxon>
        <taxon>Salmonella</taxon>
    </lineage>
</organism>
<protein>
    <recommendedName>
        <fullName evidence="1">Cardiolipin synthase A</fullName>
        <shortName evidence="1">CL synthase</shortName>
        <ecNumber evidence="1">2.7.8.-</ecNumber>
    </recommendedName>
</protein>
<accession>P63799</accession>
<accession>Q8XH03</accession>
<gene>
    <name evidence="1" type="primary">clsA</name>
    <name type="synonym">cls</name>
    <name type="ordered locus">STY1312</name>
    <name type="ordered locus">t1651</name>
</gene>
<sequence>MTTFYTVVSWLVILGYWVLIAGVTLRILMKRRAVPSAMAWLLIIYILPLVGIIAYLSVGELHLGKRRAERARAMWPSTAKWLNDLKACKHIFAQENSSVASSLFKLCERRQGIAGVKGNQLQLLTDSDDVMQALIRDIQLARHNIEMVFYIWQPGGMADQVAESLMAAARRGIHCRLMLDSAGSVAFFRSPWAAMMRNAGIEVVEALKVNLMRVFLRRMDLRQHRKMVMIDNYIAYTGSMNMVDPRFFKQDAGVGQWVDLMARMEGPVATAMGIVYSCDWEIETGKRILPPPPDVNIMPFEQASGHTIHTIASGPGFPEDLIHQALLTATYAAREYLIMTTPYFVPSDDLLHAICTAAQRGVDVSIILPRKNDSLLVGWASRAFFSELLAAGVKIYQFEGGLLHTKSVLVDGELSLVGTVNLDMRSLWLNFEITLVIDDTGFGADLAAVQDDYISRSRLLDARLWVKRPLWQRITERLFYFFSPLL</sequence>
<comment type="function">
    <text evidence="1">Catalyzes the reversible phosphatidyl group transfer from one phosphatidylglycerol molecule to another to form cardiolipin (CL) (diphosphatidylglycerol) and glycerol.</text>
</comment>
<comment type="catalytic activity">
    <reaction evidence="1">
        <text>2 a 1,2-diacyl-sn-glycero-3-phospho-(1'-sn-glycerol) = a cardiolipin + glycerol</text>
        <dbReference type="Rhea" id="RHEA:31451"/>
        <dbReference type="ChEBI" id="CHEBI:17754"/>
        <dbReference type="ChEBI" id="CHEBI:62237"/>
        <dbReference type="ChEBI" id="CHEBI:64716"/>
    </reaction>
</comment>
<comment type="subcellular location">
    <subcellularLocation>
        <location evidence="1">Cell inner membrane</location>
        <topology evidence="1">Multi-pass membrane protein</topology>
    </subcellularLocation>
</comment>
<comment type="similarity">
    <text evidence="1">Belongs to the phospholipase D family. Cardiolipin synthase subfamily. ClsA sub-subfamily.</text>
</comment>
<dbReference type="EC" id="2.7.8.-" evidence="1"/>
<dbReference type="EMBL" id="AL513382">
    <property type="protein sequence ID" value="CAD08393.1"/>
    <property type="molecule type" value="Genomic_DNA"/>
</dbReference>
<dbReference type="EMBL" id="AE014613">
    <property type="protein sequence ID" value="AAO69278.1"/>
    <property type="molecule type" value="Genomic_DNA"/>
</dbReference>
<dbReference type="RefSeq" id="NP_455759.1">
    <property type="nucleotide sequence ID" value="NC_003198.1"/>
</dbReference>
<dbReference type="RefSeq" id="WP_000206886.1">
    <property type="nucleotide sequence ID" value="NZ_WSUR01000006.1"/>
</dbReference>
<dbReference type="SMR" id="P63799"/>
<dbReference type="STRING" id="220341.gene:17585273"/>
<dbReference type="KEGG" id="stt:t1651"/>
<dbReference type="KEGG" id="sty:STY1312"/>
<dbReference type="PATRIC" id="fig|220341.7.peg.1318"/>
<dbReference type="eggNOG" id="COG1502">
    <property type="taxonomic scope" value="Bacteria"/>
</dbReference>
<dbReference type="HOGENOM" id="CLU_038053_1_0_6"/>
<dbReference type="OMA" id="WLNFEVT"/>
<dbReference type="OrthoDB" id="9814092at2"/>
<dbReference type="Proteomes" id="UP000000541">
    <property type="component" value="Chromosome"/>
</dbReference>
<dbReference type="Proteomes" id="UP000002670">
    <property type="component" value="Chromosome"/>
</dbReference>
<dbReference type="GO" id="GO:0005886">
    <property type="term" value="C:plasma membrane"/>
    <property type="evidence" value="ECO:0007669"/>
    <property type="project" value="UniProtKB-SubCell"/>
</dbReference>
<dbReference type="GO" id="GO:0008808">
    <property type="term" value="F:cardiolipin synthase activity"/>
    <property type="evidence" value="ECO:0007669"/>
    <property type="project" value="InterPro"/>
</dbReference>
<dbReference type="GO" id="GO:0032049">
    <property type="term" value="P:cardiolipin biosynthetic process"/>
    <property type="evidence" value="ECO:0007669"/>
    <property type="project" value="InterPro"/>
</dbReference>
<dbReference type="CDD" id="cd09152">
    <property type="entry name" value="PLDc_EcCLS_like_1"/>
    <property type="match status" value="1"/>
</dbReference>
<dbReference type="CDD" id="cd09158">
    <property type="entry name" value="PLDc_EcCLS_like_2"/>
    <property type="match status" value="1"/>
</dbReference>
<dbReference type="FunFam" id="3.30.870.10:FF:000002">
    <property type="entry name" value="Cardiolipin synthase A"/>
    <property type="match status" value="1"/>
</dbReference>
<dbReference type="FunFam" id="3.30.870.10:FF:000003">
    <property type="entry name" value="Cardiolipin synthase A"/>
    <property type="match status" value="1"/>
</dbReference>
<dbReference type="Gene3D" id="3.30.870.10">
    <property type="entry name" value="Endonuclease Chain A"/>
    <property type="match status" value="2"/>
</dbReference>
<dbReference type="HAMAP" id="MF_00190">
    <property type="entry name" value="Cardiolipin_synth_ClsA"/>
    <property type="match status" value="1"/>
</dbReference>
<dbReference type="InterPro" id="IPR022924">
    <property type="entry name" value="Cardiolipin_synthase"/>
</dbReference>
<dbReference type="InterPro" id="IPR030840">
    <property type="entry name" value="CL_synthase_A"/>
</dbReference>
<dbReference type="InterPro" id="IPR027379">
    <property type="entry name" value="CLS_N"/>
</dbReference>
<dbReference type="InterPro" id="IPR025202">
    <property type="entry name" value="PLD-like_dom"/>
</dbReference>
<dbReference type="InterPro" id="IPR001736">
    <property type="entry name" value="PLipase_D/transphosphatidylase"/>
</dbReference>
<dbReference type="NCBIfam" id="TIGR04265">
    <property type="entry name" value="bac_cardiolipin"/>
    <property type="match status" value="1"/>
</dbReference>
<dbReference type="PANTHER" id="PTHR21248">
    <property type="entry name" value="CARDIOLIPIN SYNTHASE"/>
    <property type="match status" value="1"/>
</dbReference>
<dbReference type="PANTHER" id="PTHR21248:SF22">
    <property type="entry name" value="PHOSPHOLIPASE D"/>
    <property type="match status" value="1"/>
</dbReference>
<dbReference type="Pfam" id="PF13091">
    <property type="entry name" value="PLDc_2"/>
    <property type="match status" value="2"/>
</dbReference>
<dbReference type="Pfam" id="PF13396">
    <property type="entry name" value="PLDc_N"/>
    <property type="match status" value="1"/>
</dbReference>
<dbReference type="SMART" id="SM00155">
    <property type="entry name" value="PLDc"/>
    <property type="match status" value="2"/>
</dbReference>
<dbReference type="SUPFAM" id="SSF56024">
    <property type="entry name" value="Phospholipase D/nuclease"/>
    <property type="match status" value="2"/>
</dbReference>
<dbReference type="PROSITE" id="PS50035">
    <property type="entry name" value="PLD"/>
    <property type="match status" value="2"/>
</dbReference>
<keyword id="KW-0997">Cell inner membrane</keyword>
<keyword id="KW-1003">Cell membrane</keyword>
<keyword id="KW-0444">Lipid biosynthesis</keyword>
<keyword id="KW-0443">Lipid metabolism</keyword>
<keyword id="KW-0472">Membrane</keyword>
<keyword id="KW-0594">Phospholipid biosynthesis</keyword>
<keyword id="KW-1208">Phospholipid metabolism</keyword>
<keyword id="KW-0677">Repeat</keyword>
<keyword id="KW-0808">Transferase</keyword>
<keyword id="KW-0812">Transmembrane</keyword>
<keyword id="KW-1133">Transmembrane helix</keyword>
<feature type="chain" id="PRO_0000201265" description="Cardiolipin synthase A">
    <location>
        <begin position="1"/>
        <end position="486"/>
    </location>
</feature>
<feature type="transmembrane region" description="Helical" evidence="1">
    <location>
        <begin position="3"/>
        <end position="23"/>
    </location>
</feature>
<feature type="transmembrane region" description="Helical" evidence="1">
    <location>
        <begin position="38"/>
        <end position="58"/>
    </location>
</feature>
<feature type="domain" description="PLD phosphodiesterase 1" evidence="1">
    <location>
        <begin position="219"/>
        <end position="246"/>
    </location>
</feature>
<feature type="domain" description="PLD phosphodiesterase 2" evidence="1">
    <location>
        <begin position="399"/>
        <end position="426"/>
    </location>
</feature>
<feature type="active site" evidence="1">
    <location>
        <position position="224"/>
    </location>
</feature>
<feature type="active site" evidence="1">
    <location>
        <position position="226"/>
    </location>
</feature>
<feature type="active site" evidence="1">
    <location>
        <position position="231"/>
    </location>
</feature>
<feature type="active site" evidence="1">
    <location>
        <position position="404"/>
    </location>
</feature>
<feature type="active site" evidence="1">
    <location>
        <position position="406"/>
    </location>
</feature>
<feature type="active site" evidence="1">
    <location>
        <position position="411"/>
    </location>
</feature>
<proteinExistence type="inferred from homology"/>
<reference key="1">
    <citation type="journal article" date="2001" name="Nature">
        <title>Complete genome sequence of a multiple drug resistant Salmonella enterica serovar Typhi CT18.</title>
        <authorList>
            <person name="Parkhill J."/>
            <person name="Dougan G."/>
            <person name="James K.D."/>
            <person name="Thomson N.R."/>
            <person name="Pickard D."/>
            <person name="Wain J."/>
            <person name="Churcher C.M."/>
            <person name="Mungall K.L."/>
            <person name="Bentley S.D."/>
            <person name="Holden M.T.G."/>
            <person name="Sebaihia M."/>
            <person name="Baker S."/>
            <person name="Basham D."/>
            <person name="Brooks K."/>
            <person name="Chillingworth T."/>
            <person name="Connerton P."/>
            <person name="Cronin A."/>
            <person name="Davis P."/>
            <person name="Davies R.M."/>
            <person name="Dowd L."/>
            <person name="White N."/>
            <person name="Farrar J."/>
            <person name="Feltwell T."/>
            <person name="Hamlin N."/>
            <person name="Haque A."/>
            <person name="Hien T.T."/>
            <person name="Holroyd S."/>
            <person name="Jagels K."/>
            <person name="Krogh A."/>
            <person name="Larsen T.S."/>
            <person name="Leather S."/>
            <person name="Moule S."/>
            <person name="O'Gaora P."/>
            <person name="Parry C."/>
            <person name="Quail M.A."/>
            <person name="Rutherford K.M."/>
            <person name="Simmonds M."/>
            <person name="Skelton J."/>
            <person name="Stevens K."/>
            <person name="Whitehead S."/>
            <person name="Barrell B.G."/>
        </authorList>
    </citation>
    <scope>NUCLEOTIDE SEQUENCE [LARGE SCALE GENOMIC DNA]</scope>
    <source>
        <strain>CT18</strain>
    </source>
</reference>
<reference key="2">
    <citation type="journal article" date="2003" name="J. Bacteriol.">
        <title>Comparative genomics of Salmonella enterica serovar Typhi strains Ty2 and CT18.</title>
        <authorList>
            <person name="Deng W."/>
            <person name="Liou S.-R."/>
            <person name="Plunkett G. III"/>
            <person name="Mayhew G.F."/>
            <person name="Rose D.J."/>
            <person name="Burland V."/>
            <person name="Kodoyianni V."/>
            <person name="Schwartz D.C."/>
            <person name="Blattner F.R."/>
        </authorList>
    </citation>
    <scope>NUCLEOTIDE SEQUENCE [LARGE SCALE GENOMIC DNA]</scope>
    <source>
        <strain>ATCC 700931 / Ty2</strain>
    </source>
</reference>
<evidence type="ECO:0000255" key="1">
    <source>
        <dbReference type="HAMAP-Rule" id="MF_00190"/>
    </source>
</evidence>
<name>CLSA_SALTI</name>